<proteinExistence type="predicted"/>
<sequence>MEKTGLPLSLESFQQLLPQIFMRAKGRSIRLIGLHVNLPEENKQEQMSLW</sequence>
<reference key="1">
    <citation type="journal article" date="1995" name="Science">
        <title>Whole-genome random sequencing and assembly of Haemophilus influenzae Rd.</title>
        <authorList>
            <person name="Fleischmann R.D."/>
            <person name="Adams M.D."/>
            <person name="White O."/>
            <person name="Clayton R.A."/>
            <person name="Kirkness E.F."/>
            <person name="Kerlavage A.R."/>
            <person name="Bult C.J."/>
            <person name="Tomb J.-F."/>
            <person name="Dougherty B.A."/>
            <person name="Merrick J.M."/>
            <person name="McKenney K."/>
            <person name="Sutton G.G."/>
            <person name="FitzHugh W."/>
            <person name="Fields C.A."/>
            <person name="Gocayne J.D."/>
            <person name="Scott J.D."/>
            <person name="Shirley R."/>
            <person name="Liu L.-I."/>
            <person name="Glodek A."/>
            <person name="Kelley J.M."/>
            <person name="Weidman J.F."/>
            <person name="Phillips C.A."/>
            <person name="Spriggs T."/>
            <person name="Hedblom E."/>
            <person name="Cotton M.D."/>
            <person name="Utterback T.R."/>
            <person name="Hanna M.C."/>
            <person name="Nguyen D.T."/>
            <person name="Saudek D.M."/>
            <person name="Brandon R.C."/>
            <person name="Fine L.D."/>
            <person name="Fritchman J.L."/>
            <person name="Fuhrmann J.L."/>
            <person name="Geoghagen N.S.M."/>
            <person name="Gnehm C.L."/>
            <person name="McDonald L.A."/>
            <person name="Small K.V."/>
            <person name="Fraser C.M."/>
            <person name="Smith H.O."/>
            <person name="Venter J.C."/>
        </authorList>
    </citation>
    <scope>NUCLEOTIDE SEQUENCE [LARGE SCALE GENOMIC DNA]</scope>
    <source>
        <strain>ATCC 51907 / DSM 11121 / KW20 / Rd</strain>
    </source>
</reference>
<reference key="2">
    <citation type="submission" date="1998-05" db="EMBL/GenBank/DDBJ databases">
        <authorList>
            <person name="White O."/>
            <person name="Clayton R.A."/>
            <person name="Kerlavage A.R."/>
            <person name="Fleischmann R.D."/>
            <person name="Peterson J."/>
            <person name="Hickey E."/>
            <person name="Dodson R."/>
            <person name="Gwinn M."/>
        </authorList>
    </citation>
    <scope>SEQUENCE REVISION</scope>
</reference>
<accession>P44256</accession>
<protein>
    <recommendedName>
        <fullName>Uncharacterized protein HI_1564</fullName>
    </recommendedName>
</protein>
<dbReference type="EMBL" id="L42023">
    <property type="protein sequence ID" value="AAC23221.1"/>
    <property type="molecule type" value="Genomic_DNA"/>
</dbReference>
<dbReference type="PIR" id="E64036">
    <property type="entry name" value="E64036"/>
</dbReference>
<dbReference type="RefSeq" id="NP_439713.1">
    <property type="nucleotide sequence ID" value="NC_000907.1"/>
</dbReference>
<dbReference type="STRING" id="71421.HI_1564"/>
<dbReference type="EnsemblBacteria" id="AAC23221">
    <property type="protein sequence ID" value="AAC23221"/>
    <property type="gene ID" value="HI_1564"/>
</dbReference>
<dbReference type="KEGG" id="hin:HI_1564"/>
<dbReference type="PATRIC" id="fig|71421.8.peg.1635"/>
<dbReference type="eggNOG" id="COG0389">
    <property type="taxonomic scope" value="Bacteria"/>
</dbReference>
<dbReference type="HOGENOM" id="CLU_3153418_0_0_6"/>
<dbReference type="OrthoDB" id="9808813at2"/>
<dbReference type="BioCyc" id="HINF71421:G1GJ1-1583-MONOMER"/>
<dbReference type="Proteomes" id="UP000000579">
    <property type="component" value="Chromosome"/>
</dbReference>
<dbReference type="GO" id="GO:0003684">
    <property type="term" value="F:damaged DNA binding"/>
    <property type="evidence" value="ECO:0007669"/>
    <property type="project" value="InterPro"/>
</dbReference>
<dbReference type="GO" id="GO:0006281">
    <property type="term" value="P:DNA repair"/>
    <property type="evidence" value="ECO:0007669"/>
    <property type="project" value="InterPro"/>
</dbReference>
<dbReference type="Gene3D" id="3.30.1490.100">
    <property type="entry name" value="DNA polymerase, Y-family, little finger domain"/>
    <property type="match status" value="1"/>
</dbReference>
<dbReference type="InterPro" id="IPR036775">
    <property type="entry name" value="DNA_pol_Y-fam_lit_finger_sf"/>
</dbReference>
<dbReference type="SUPFAM" id="SSF100879">
    <property type="entry name" value="Lesion bypass DNA polymerase (Y-family), little finger domain"/>
    <property type="match status" value="1"/>
</dbReference>
<feature type="chain" id="PRO_0000078087" description="Uncharacterized protein HI_1564">
    <location>
        <begin position="1"/>
        <end position="50"/>
    </location>
</feature>
<name>Y1564_HAEIN</name>
<keyword id="KW-1185">Reference proteome</keyword>
<gene>
    <name type="ordered locus">HI_1564</name>
</gene>
<organism>
    <name type="scientific">Haemophilus influenzae (strain ATCC 51907 / DSM 11121 / KW20 / Rd)</name>
    <dbReference type="NCBI Taxonomy" id="71421"/>
    <lineage>
        <taxon>Bacteria</taxon>
        <taxon>Pseudomonadati</taxon>
        <taxon>Pseudomonadota</taxon>
        <taxon>Gammaproteobacteria</taxon>
        <taxon>Pasteurellales</taxon>
        <taxon>Pasteurellaceae</taxon>
        <taxon>Haemophilus</taxon>
    </lineage>
</organism>